<name>Y1742_COXBU</name>
<organism>
    <name type="scientific">Coxiella burnetii (strain RSA 493 / Nine Mile phase I)</name>
    <dbReference type="NCBI Taxonomy" id="227377"/>
    <lineage>
        <taxon>Bacteria</taxon>
        <taxon>Pseudomonadati</taxon>
        <taxon>Pseudomonadota</taxon>
        <taxon>Gammaproteobacteria</taxon>
        <taxon>Legionellales</taxon>
        <taxon>Coxiellaceae</taxon>
        <taxon>Coxiella</taxon>
    </lineage>
</organism>
<comment type="similarity">
    <text evidence="1">Belongs to the UPF0102 family.</text>
</comment>
<accession>Q83AY5</accession>
<evidence type="ECO:0000255" key="1">
    <source>
        <dbReference type="HAMAP-Rule" id="MF_00048"/>
    </source>
</evidence>
<feature type="chain" id="PRO_0000167347" description="UPF0102 protein CBU_1742">
    <location>
        <begin position="1"/>
        <end position="120"/>
    </location>
</feature>
<gene>
    <name type="ordered locus">CBU_1742</name>
</gene>
<proteinExistence type="inferred from homology"/>
<sequence length="120" mass="14231">MFSLTQKIGFNAEKTACRYLQKQGLSFITKNFRYKQGEIDLIMSDQSMLVFIEVRYRRFSDFIHPVATVTPLKQRRLIKTALHYLQKHRPLDKISCRFDIVGITADRQITWIKNAIEVEY</sequence>
<protein>
    <recommendedName>
        <fullName evidence="1">UPF0102 protein CBU_1742</fullName>
    </recommendedName>
</protein>
<keyword id="KW-1185">Reference proteome</keyword>
<dbReference type="EMBL" id="AE016828">
    <property type="protein sequence ID" value="AAO91236.1"/>
    <property type="molecule type" value="Genomic_DNA"/>
</dbReference>
<dbReference type="RefSeq" id="NP_820722.1">
    <property type="nucleotide sequence ID" value="NC_002971.4"/>
</dbReference>
<dbReference type="RefSeq" id="WP_010958409.1">
    <property type="nucleotide sequence ID" value="NC_002971.4"/>
</dbReference>
<dbReference type="SMR" id="Q83AY5"/>
<dbReference type="STRING" id="227377.CBU_1742"/>
<dbReference type="EnsemblBacteria" id="AAO91236">
    <property type="protein sequence ID" value="AAO91236"/>
    <property type="gene ID" value="CBU_1742"/>
</dbReference>
<dbReference type="GeneID" id="1209653"/>
<dbReference type="KEGG" id="cbu:CBU_1742"/>
<dbReference type="PATRIC" id="fig|227377.7.peg.1731"/>
<dbReference type="eggNOG" id="COG0792">
    <property type="taxonomic scope" value="Bacteria"/>
</dbReference>
<dbReference type="HOGENOM" id="CLU_115353_1_0_6"/>
<dbReference type="OrthoDB" id="9794876at2"/>
<dbReference type="Proteomes" id="UP000002671">
    <property type="component" value="Chromosome"/>
</dbReference>
<dbReference type="GO" id="GO:0003676">
    <property type="term" value="F:nucleic acid binding"/>
    <property type="evidence" value="ECO:0007669"/>
    <property type="project" value="InterPro"/>
</dbReference>
<dbReference type="CDD" id="cd20736">
    <property type="entry name" value="PoNe_Nuclease"/>
    <property type="match status" value="1"/>
</dbReference>
<dbReference type="Gene3D" id="3.40.1350.10">
    <property type="match status" value="1"/>
</dbReference>
<dbReference type="HAMAP" id="MF_00048">
    <property type="entry name" value="UPF0102"/>
    <property type="match status" value="1"/>
</dbReference>
<dbReference type="InterPro" id="IPR011335">
    <property type="entry name" value="Restrct_endonuc-II-like"/>
</dbReference>
<dbReference type="InterPro" id="IPR011856">
    <property type="entry name" value="tRNA_endonuc-like_dom_sf"/>
</dbReference>
<dbReference type="InterPro" id="IPR003509">
    <property type="entry name" value="UPF0102_YraN-like"/>
</dbReference>
<dbReference type="NCBIfam" id="NF009150">
    <property type="entry name" value="PRK12497.1-3"/>
    <property type="match status" value="1"/>
</dbReference>
<dbReference type="NCBIfam" id="NF011277">
    <property type="entry name" value="PRK14684.1"/>
    <property type="match status" value="1"/>
</dbReference>
<dbReference type="NCBIfam" id="TIGR00252">
    <property type="entry name" value="YraN family protein"/>
    <property type="match status" value="1"/>
</dbReference>
<dbReference type="PANTHER" id="PTHR34039">
    <property type="entry name" value="UPF0102 PROTEIN YRAN"/>
    <property type="match status" value="1"/>
</dbReference>
<dbReference type="PANTHER" id="PTHR34039:SF1">
    <property type="entry name" value="UPF0102 PROTEIN YRAN"/>
    <property type="match status" value="1"/>
</dbReference>
<dbReference type="Pfam" id="PF02021">
    <property type="entry name" value="UPF0102"/>
    <property type="match status" value="1"/>
</dbReference>
<dbReference type="SUPFAM" id="SSF52980">
    <property type="entry name" value="Restriction endonuclease-like"/>
    <property type="match status" value="1"/>
</dbReference>
<reference key="1">
    <citation type="journal article" date="2003" name="Proc. Natl. Acad. Sci. U.S.A.">
        <title>Complete genome sequence of the Q-fever pathogen, Coxiella burnetii.</title>
        <authorList>
            <person name="Seshadri R."/>
            <person name="Paulsen I.T."/>
            <person name="Eisen J.A."/>
            <person name="Read T.D."/>
            <person name="Nelson K.E."/>
            <person name="Nelson W.C."/>
            <person name="Ward N.L."/>
            <person name="Tettelin H."/>
            <person name="Davidsen T.M."/>
            <person name="Beanan M.J."/>
            <person name="DeBoy R.T."/>
            <person name="Daugherty S.C."/>
            <person name="Brinkac L.M."/>
            <person name="Madupu R."/>
            <person name="Dodson R.J."/>
            <person name="Khouri H.M."/>
            <person name="Lee K.H."/>
            <person name="Carty H.A."/>
            <person name="Scanlan D."/>
            <person name="Heinzen R.A."/>
            <person name="Thompson H.A."/>
            <person name="Samuel J.E."/>
            <person name="Fraser C.M."/>
            <person name="Heidelberg J.F."/>
        </authorList>
    </citation>
    <scope>NUCLEOTIDE SEQUENCE [LARGE SCALE GENOMIC DNA]</scope>
    <source>
        <strain>RSA 493 / Nine Mile phase I</strain>
    </source>
</reference>